<protein>
    <recommendedName>
        <fullName evidence="1">Histidinol-phosphate aminotransferase</fullName>
        <ecNumber evidence="1">2.6.1.9</ecNumber>
    </recommendedName>
    <alternativeName>
        <fullName evidence="1">Imidazole acetol-phosphate transaminase</fullName>
    </alternativeName>
</protein>
<feature type="chain" id="PRO_0000153309" description="Histidinol-phosphate aminotransferase">
    <location>
        <begin position="1"/>
        <end position="360"/>
    </location>
</feature>
<feature type="modified residue" description="N6-(pyridoxal phosphate)lysine" evidence="1">
    <location>
        <position position="223"/>
    </location>
</feature>
<keyword id="KW-0028">Amino-acid biosynthesis</keyword>
<keyword id="KW-0032">Aminotransferase</keyword>
<keyword id="KW-0368">Histidine biosynthesis</keyword>
<keyword id="KW-0663">Pyridoxal phosphate</keyword>
<keyword id="KW-0808">Transferase</keyword>
<accession>Q8KZ92</accession>
<comment type="catalytic activity">
    <reaction evidence="1">
        <text>L-histidinol phosphate + 2-oxoglutarate = 3-(imidazol-4-yl)-2-oxopropyl phosphate + L-glutamate</text>
        <dbReference type="Rhea" id="RHEA:23744"/>
        <dbReference type="ChEBI" id="CHEBI:16810"/>
        <dbReference type="ChEBI" id="CHEBI:29985"/>
        <dbReference type="ChEBI" id="CHEBI:57766"/>
        <dbReference type="ChEBI" id="CHEBI:57980"/>
        <dbReference type="EC" id="2.6.1.9"/>
    </reaction>
</comment>
<comment type="cofactor">
    <cofactor evidence="1">
        <name>pyridoxal 5'-phosphate</name>
        <dbReference type="ChEBI" id="CHEBI:597326"/>
    </cofactor>
</comment>
<comment type="pathway">
    <text evidence="1">Amino-acid biosynthesis; L-histidine biosynthesis; L-histidine from 5-phospho-alpha-D-ribose 1-diphosphate: step 7/9.</text>
</comment>
<comment type="subunit">
    <text evidence="1">Homodimer.</text>
</comment>
<comment type="similarity">
    <text evidence="1">Belongs to the class-II pyridoxal-phosphate-dependent aminotransferase family. Histidinol-phosphate aminotransferase subfamily.</text>
</comment>
<dbReference type="EC" id="2.6.1.9" evidence="1"/>
<dbReference type="EMBL" id="AB091253">
    <property type="protein sequence ID" value="BAC11847.1"/>
    <property type="molecule type" value="Genomic_DNA"/>
</dbReference>
<dbReference type="RefSeq" id="WP_014480119.1">
    <property type="nucleotide sequence ID" value="NZ_SJSU01000007.1"/>
</dbReference>
<dbReference type="SMR" id="Q8KZ92"/>
<dbReference type="UniPathway" id="UPA00031">
    <property type="reaction ID" value="UER00012"/>
</dbReference>
<dbReference type="GO" id="GO:0004400">
    <property type="term" value="F:histidinol-phosphate transaminase activity"/>
    <property type="evidence" value="ECO:0007669"/>
    <property type="project" value="UniProtKB-UniRule"/>
</dbReference>
<dbReference type="GO" id="GO:0030170">
    <property type="term" value="F:pyridoxal phosphate binding"/>
    <property type="evidence" value="ECO:0007669"/>
    <property type="project" value="InterPro"/>
</dbReference>
<dbReference type="GO" id="GO:0000105">
    <property type="term" value="P:L-histidine biosynthetic process"/>
    <property type="evidence" value="ECO:0007669"/>
    <property type="project" value="UniProtKB-UniRule"/>
</dbReference>
<dbReference type="CDD" id="cd00609">
    <property type="entry name" value="AAT_like"/>
    <property type="match status" value="1"/>
</dbReference>
<dbReference type="Gene3D" id="3.90.1150.10">
    <property type="entry name" value="Aspartate Aminotransferase, domain 1"/>
    <property type="match status" value="1"/>
</dbReference>
<dbReference type="Gene3D" id="3.40.640.10">
    <property type="entry name" value="Type I PLP-dependent aspartate aminotransferase-like (Major domain)"/>
    <property type="match status" value="1"/>
</dbReference>
<dbReference type="HAMAP" id="MF_01023">
    <property type="entry name" value="HisC_aminotrans_2"/>
    <property type="match status" value="1"/>
</dbReference>
<dbReference type="InterPro" id="IPR001917">
    <property type="entry name" value="Aminotrans_II_pyridoxalP_BS"/>
</dbReference>
<dbReference type="InterPro" id="IPR004839">
    <property type="entry name" value="Aminotransferase_I/II_large"/>
</dbReference>
<dbReference type="InterPro" id="IPR005861">
    <property type="entry name" value="HisP_aminotrans"/>
</dbReference>
<dbReference type="InterPro" id="IPR050106">
    <property type="entry name" value="HistidinolP_aminotransfase"/>
</dbReference>
<dbReference type="InterPro" id="IPR015424">
    <property type="entry name" value="PyrdxlP-dep_Trfase"/>
</dbReference>
<dbReference type="InterPro" id="IPR015421">
    <property type="entry name" value="PyrdxlP-dep_Trfase_major"/>
</dbReference>
<dbReference type="InterPro" id="IPR015422">
    <property type="entry name" value="PyrdxlP-dep_Trfase_small"/>
</dbReference>
<dbReference type="NCBIfam" id="TIGR01141">
    <property type="entry name" value="hisC"/>
    <property type="match status" value="1"/>
</dbReference>
<dbReference type="PANTHER" id="PTHR43643:SF3">
    <property type="entry name" value="HISTIDINOL-PHOSPHATE AMINOTRANSFERASE"/>
    <property type="match status" value="1"/>
</dbReference>
<dbReference type="PANTHER" id="PTHR43643">
    <property type="entry name" value="HISTIDINOL-PHOSPHATE AMINOTRANSFERASE 2"/>
    <property type="match status" value="1"/>
</dbReference>
<dbReference type="Pfam" id="PF00155">
    <property type="entry name" value="Aminotran_1_2"/>
    <property type="match status" value="1"/>
</dbReference>
<dbReference type="SUPFAM" id="SSF53383">
    <property type="entry name" value="PLP-dependent transferases"/>
    <property type="match status" value="1"/>
</dbReference>
<dbReference type="PROSITE" id="PS00599">
    <property type="entry name" value="AA_TRANSFER_CLASS_2"/>
    <property type="match status" value="1"/>
</dbReference>
<name>HIS8_BACNA</name>
<gene>
    <name evidence="1" type="primary">hisC</name>
</gene>
<proteinExistence type="inferred from homology"/>
<sequence>MRIKEHLKQLKPYQPGKPIEAVKSEYGLDKVVKLASNENPYGCSEAAKEALHHEIQQLALYPDGYSAALRTRLSKHLNVSETSLIFGNGSDEIIQIICRAFLNNKTNTITAAPTFPQYKHNAVIEGAEVREIALRPDGSHDLDAMLEAIDEQTQVVWICSPNNPTGTYTSEGELLAFLERVPSRVLVVLDEAYYEYVTAEDYPETVPLLSKYSNLMILRTFSKAYGLAALRVGYGIADENLIRQIEPAREPFNTSRLGQAAAIAALDDQAFIASCVEQNNAGLQQYYDFAKTHGLKCYPSQTNFVLIDFKRPADELFQALLEKGYIVRSGNALGFPTSLRITIGTKEQNEEILAILAEIL</sequence>
<organism>
    <name type="scientific">Bacillus subtilis subsp. natto</name>
    <dbReference type="NCBI Taxonomy" id="86029"/>
    <lineage>
        <taxon>Bacteria</taxon>
        <taxon>Bacillati</taxon>
        <taxon>Bacillota</taxon>
        <taxon>Bacilli</taxon>
        <taxon>Bacillales</taxon>
        <taxon>Bacillaceae</taxon>
        <taxon>Bacillus</taxon>
    </lineage>
</organism>
<evidence type="ECO:0000255" key="1">
    <source>
        <dbReference type="HAMAP-Rule" id="MF_01023"/>
    </source>
</evidence>
<reference key="1">
    <citation type="submission" date="2002-09" db="EMBL/GenBank/DDBJ databases">
        <title>Genetic analysis of trpA and hisC genes in Bacillus subtilis natto OK2.</title>
        <authorList>
            <person name="Murayama R."/>
            <person name="Nanamiya H."/>
            <person name="Kawamura F."/>
        </authorList>
    </citation>
    <scope>NUCLEOTIDE SEQUENCE [GENOMIC DNA]</scope>
    <source>
        <strain>OK2</strain>
    </source>
</reference>